<reference key="1">
    <citation type="journal article" date="2009" name="BMC Genomics">
        <title>Metabolic analysis of the soil microbe Dechloromonas aromatica str. RCB: indications of a surprisingly complex life-style and cryptic anaerobic pathways for aromatic degradation.</title>
        <authorList>
            <person name="Salinero K.K."/>
            <person name="Keller K."/>
            <person name="Feil W.S."/>
            <person name="Feil H."/>
            <person name="Trong S."/>
            <person name="Di Bartolo G."/>
            <person name="Lapidus A."/>
        </authorList>
    </citation>
    <scope>NUCLEOTIDE SEQUENCE [LARGE SCALE GENOMIC DNA]</scope>
    <source>
        <strain>RCB</strain>
    </source>
</reference>
<organism>
    <name type="scientific">Dechloromonas aromatica (strain RCB)</name>
    <dbReference type="NCBI Taxonomy" id="159087"/>
    <lineage>
        <taxon>Bacteria</taxon>
        <taxon>Pseudomonadati</taxon>
        <taxon>Pseudomonadota</taxon>
        <taxon>Betaproteobacteria</taxon>
        <taxon>Rhodocyclales</taxon>
        <taxon>Azonexaceae</taxon>
        <taxon>Dechloromonas</taxon>
    </lineage>
</organism>
<name>PPNP_DECAR</name>
<proteinExistence type="inferred from homology"/>
<feature type="chain" id="PRO_0000292787" description="Pyrimidine/purine nucleoside phosphorylase">
    <location>
        <begin position="1"/>
        <end position="103"/>
    </location>
</feature>
<comment type="function">
    <text evidence="1">Catalyzes the phosphorolysis of diverse nucleosides, yielding D-ribose 1-phosphate and the respective free bases. Can use uridine, adenosine, guanosine, cytidine, thymidine, inosine and xanthosine as substrates. Also catalyzes the reverse reactions.</text>
</comment>
<comment type="catalytic activity">
    <reaction evidence="1">
        <text>a purine D-ribonucleoside + phosphate = a purine nucleobase + alpha-D-ribose 1-phosphate</text>
        <dbReference type="Rhea" id="RHEA:19805"/>
        <dbReference type="ChEBI" id="CHEBI:26386"/>
        <dbReference type="ChEBI" id="CHEBI:43474"/>
        <dbReference type="ChEBI" id="CHEBI:57720"/>
        <dbReference type="ChEBI" id="CHEBI:142355"/>
        <dbReference type="EC" id="2.4.2.1"/>
    </reaction>
</comment>
<comment type="catalytic activity">
    <reaction evidence="1">
        <text>adenosine + phosphate = alpha-D-ribose 1-phosphate + adenine</text>
        <dbReference type="Rhea" id="RHEA:27642"/>
        <dbReference type="ChEBI" id="CHEBI:16335"/>
        <dbReference type="ChEBI" id="CHEBI:16708"/>
        <dbReference type="ChEBI" id="CHEBI:43474"/>
        <dbReference type="ChEBI" id="CHEBI:57720"/>
        <dbReference type="EC" id="2.4.2.1"/>
    </reaction>
</comment>
<comment type="catalytic activity">
    <reaction evidence="1">
        <text>cytidine + phosphate = cytosine + alpha-D-ribose 1-phosphate</text>
        <dbReference type="Rhea" id="RHEA:52540"/>
        <dbReference type="ChEBI" id="CHEBI:16040"/>
        <dbReference type="ChEBI" id="CHEBI:17562"/>
        <dbReference type="ChEBI" id="CHEBI:43474"/>
        <dbReference type="ChEBI" id="CHEBI:57720"/>
        <dbReference type="EC" id="2.4.2.2"/>
    </reaction>
</comment>
<comment type="catalytic activity">
    <reaction evidence="1">
        <text>guanosine + phosphate = alpha-D-ribose 1-phosphate + guanine</text>
        <dbReference type="Rhea" id="RHEA:13233"/>
        <dbReference type="ChEBI" id="CHEBI:16235"/>
        <dbReference type="ChEBI" id="CHEBI:16750"/>
        <dbReference type="ChEBI" id="CHEBI:43474"/>
        <dbReference type="ChEBI" id="CHEBI:57720"/>
        <dbReference type="EC" id="2.4.2.1"/>
    </reaction>
</comment>
<comment type="catalytic activity">
    <reaction evidence="1">
        <text>inosine + phosphate = alpha-D-ribose 1-phosphate + hypoxanthine</text>
        <dbReference type="Rhea" id="RHEA:27646"/>
        <dbReference type="ChEBI" id="CHEBI:17368"/>
        <dbReference type="ChEBI" id="CHEBI:17596"/>
        <dbReference type="ChEBI" id="CHEBI:43474"/>
        <dbReference type="ChEBI" id="CHEBI:57720"/>
        <dbReference type="EC" id="2.4.2.1"/>
    </reaction>
</comment>
<comment type="catalytic activity">
    <reaction evidence="1">
        <text>thymidine + phosphate = 2-deoxy-alpha-D-ribose 1-phosphate + thymine</text>
        <dbReference type="Rhea" id="RHEA:16037"/>
        <dbReference type="ChEBI" id="CHEBI:17748"/>
        <dbReference type="ChEBI" id="CHEBI:17821"/>
        <dbReference type="ChEBI" id="CHEBI:43474"/>
        <dbReference type="ChEBI" id="CHEBI:57259"/>
        <dbReference type="EC" id="2.4.2.2"/>
    </reaction>
</comment>
<comment type="catalytic activity">
    <reaction evidence="1">
        <text>uridine + phosphate = alpha-D-ribose 1-phosphate + uracil</text>
        <dbReference type="Rhea" id="RHEA:24388"/>
        <dbReference type="ChEBI" id="CHEBI:16704"/>
        <dbReference type="ChEBI" id="CHEBI:17568"/>
        <dbReference type="ChEBI" id="CHEBI:43474"/>
        <dbReference type="ChEBI" id="CHEBI:57720"/>
        <dbReference type="EC" id="2.4.2.2"/>
    </reaction>
</comment>
<comment type="catalytic activity">
    <reaction evidence="1">
        <text>xanthosine + phosphate = alpha-D-ribose 1-phosphate + xanthine</text>
        <dbReference type="Rhea" id="RHEA:27638"/>
        <dbReference type="ChEBI" id="CHEBI:17712"/>
        <dbReference type="ChEBI" id="CHEBI:18107"/>
        <dbReference type="ChEBI" id="CHEBI:43474"/>
        <dbReference type="ChEBI" id="CHEBI:57720"/>
        <dbReference type="EC" id="2.4.2.1"/>
    </reaction>
</comment>
<comment type="similarity">
    <text evidence="1">Belongs to the nucleoside phosphorylase PpnP family.</text>
</comment>
<protein>
    <recommendedName>
        <fullName evidence="1">Pyrimidine/purine nucleoside phosphorylase</fullName>
        <ecNumber evidence="1">2.4.2.1</ecNumber>
        <ecNumber evidence="1">2.4.2.2</ecNumber>
    </recommendedName>
    <alternativeName>
        <fullName evidence="1">Adenosine phosphorylase</fullName>
    </alternativeName>
    <alternativeName>
        <fullName evidence="1">Cytidine phosphorylase</fullName>
    </alternativeName>
    <alternativeName>
        <fullName evidence="1">Guanosine phosphorylase</fullName>
    </alternativeName>
    <alternativeName>
        <fullName evidence="1">Inosine phosphorylase</fullName>
    </alternativeName>
    <alternativeName>
        <fullName evidence="1">Thymidine phosphorylase</fullName>
    </alternativeName>
    <alternativeName>
        <fullName evidence="1">Uridine phosphorylase</fullName>
    </alternativeName>
    <alternativeName>
        <fullName evidence="1">Xanthosine phosphorylase</fullName>
    </alternativeName>
</protein>
<keyword id="KW-0328">Glycosyltransferase</keyword>
<keyword id="KW-0808">Transferase</keyword>
<gene>
    <name evidence="1" type="primary">ppnP</name>
    <name type="ordered locus">Daro_3029</name>
</gene>
<accession>Q47BM2</accession>
<dbReference type="EC" id="2.4.2.1" evidence="1"/>
<dbReference type="EC" id="2.4.2.2" evidence="1"/>
<dbReference type="EMBL" id="CP000089">
    <property type="protein sequence ID" value="AAZ47759.1"/>
    <property type="molecule type" value="Genomic_DNA"/>
</dbReference>
<dbReference type="SMR" id="Q47BM2"/>
<dbReference type="STRING" id="159087.Daro_3029"/>
<dbReference type="KEGG" id="dar:Daro_3029"/>
<dbReference type="eggNOG" id="COG3123">
    <property type="taxonomic scope" value="Bacteria"/>
</dbReference>
<dbReference type="HOGENOM" id="CLU_157874_1_0_4"/>
<dbReference type="OrthoDB" id="9793848at2"/>
<dbReference type="GO" id="GO:0005829">
    <property type="term" value="C:cytosol"/>
    <property type="evidence" value="ECO:0007669"/>
    <property type="project" value="TreeGrafter"/>
</dbReference>
<dbReference type="GO" id="GO:0047975">
    <property type="term" value="F:guanosine phosphorylase activity"/>
    <property type="evidence" value="ECO:0007669"/>
    <property type="project" value="UniProtKB-EC"/>
</dbReference>
<dbReference type="GO" id="GO:0004731">
    <property type="term" value="F:purine-nucleoside phosphorylase activity"/>
    <property type="evidence" value="ECO:0007669"/>
    <property type="project" value="UniProtKB-UniRule"/>
</dbReference>
<dbReference type="GO" id="GO:0009032">
    <property type="term" value="F:thymidine phosphorylase activity"/>
    <property type="evidence" value="ECO:0007669"/>
    <property type="project" value="UniProtKB-EC"/>
</dbReference>
<dbReference type="GO" id="GO:0004850">
    <property type="term" value="F:uridine phosphorylase activity"/>
    <property type="evidence" value="ECO:0007669"/>
    <property type="project" value="UniProtKB-EC"/>
</dbReference>
<dbReference type="CDD" id="cd20296">
    <property type="entry name" value="cupin_PpnP-like"/>
    <property type="match status" value="1"/>
</dbReference>
<dbReference type="Gene3D" id="2.60.120.10">
    <property type="entry name" value="Jelly Rolls"/>
    <property type="match status" value="1"/>
</dbReference>
<dbReference type="HAMAP" id="MF_01537">
    <property type="entry name" value="Nucleos_phosphorylase_PpnP"/>
    <property type="match status" value="1"/>
</dbReference>
<dbReference type="InterPro" id="IPR009664">
    <property type="entry name" value="Ppnp"/>
</dbReference>
<dbReference type="InterPro" id="IPR014710">
    <property type="entry name" value="RmlC-like_jellyroll"/>
</dbReference>
<dbReference type="InterPro" id="IPR011051">
    <property type="entry name" value="RmlC_Cupin_sf"/>
</dbReference>
<dbReference type="PANTHER" id="PTHR36540">
    <property type="entry name" value="PYRIMIDINE/PURINE NUCLEOSIDE PHOSPHORYLASE"/>
    <property type="match status" value="1"/>
</dbReference>
<dbReference type="PANTHER" id="PTHR36540:SF1">
    <property type="entry name" value="PYRIMIDINE_PURINE NUCLEOSIDE PHOSPHORYLASE"/>
    <property type="match status" value="1"/>
</dbReference>
<dbReference type="Pfam" id="PF06865">
    <property type="entry name" value="Ppnp"/>
    <property type="match status" value="1"/>
</dbReference>
<dbReference type="SUPFAM" id="SSF51182">
    <property type="entry name" value="RmlC-like cupins"/>
    <property type="match status" value="1"/>
</dbReference>
<sequence>MSQYDNVSVVKKANVYFDGKCVSHTVVLADGTKKTVGVILPSSLTFNTGAPEIMEGVGGSCRVKLKGESEWKTYGDGQSFNVPGNSSFEIACDEPYHYVCHFG</sequence>
<evidence type="ECO:0000255" key="1">
    <source>
        <dbReference type="HAMAP-Rule" id="MF_01537"/>
    </source>
</evidence>